<organism>
    <name type="scientific">Rattus norvegicus</name>
    <name type="common">Rat</name>
    <dbReference type="NCBI Taxonomy" id="10116"/>
    <lineage>
        <taxon>Eukaryota</taxon>
        <taxon>Metazoa</taxon>
        <taxon>Chordata</taxon>
        <taxon>Craniata</taxon>
        <taxon>Vertebrata</taxon>
        <taxon>Euteleostomi</taxon>
        <taxon>Mammalia</taxon>
        <taxon>Eutheria</taxon>
        <taxon>Euarchontoglires</taxon>
        <taxon>Glires</taxon>
        <taxon>Rodentia</taxon>
        <taxon>Myomorpha</taxon>
        <taxon>Muroidea</taxon>
        <taxon>Muridae</taxon>
        <taxon>Murinae</taxon>
        <taxon>Rattus</taxon>
    </lineage>
</organism>
<comment type="function">
    <text evidence="1">Chaperone specifically assisting the folding of beta-propeller/EGF modules within the family of low-density lipoprotein receptors (LDLRs). Acts as a modulator of the Wnt pathway through chaperoning the coreceptors of the canonical Wnt pathway, LRP5 and LRP6, to the plasma membrane. Essential for specification of embryonic polarity and mesoderm induction. Plays an essential role in neuromuscular junction (NMJ) formation by promoting cell-surface expression of LRP4. May regulate phagocytosis of apoptotic retinal pigment epithelium (RPE) cells.</text>
</comment>
<comment type="subunit">
    <text evidence="1">Monomer. Interacts with LRP5; the interaction prevents LRP5 from forming aggregates and chaperones LRP6 to the plasma membrane. Interacts with LRP6; the interaction prevents LRP6 from forming aggregates and chaperones LRP6 to the plasma membrane. Interacts with LRP4; the interaction promotes glycosylation of LRP4 and its cell-surface expression.</text>
</comment>
<comment type="subcellular location">
    <subcellularLocation>
        <location evidence="1">Endoplasmic reticulum</location>
    </subcellularLocation>
    <text evidence="1">Released from apoptotic cells and shed photoreceptor outer segments.</text>
</comment>
<comment type="domain">
    <text evidence="1">The chaperone domain provides a folding template for proper folding of the beta-propeller (BP) domains of LRP5/6.</text>
</comment>
<comment type="domain">
    <text evidence="1">The escort domain ensures LRP5/6 safe-trafficking from the ER to the Golgi by preventing premature ligand-binding.</text>
</comment>
<comment type="similarity">
    <text evidence="4">Belongs to the MESD family.</text>
</comment>
<keyword id="KW-0143">Chaperone</keyword>
<keyword id="KW-0256">Endoplasmic reticulum</keyword>
<keyword id="KW-0325">Glycoprotein</keyword>
<keyword id="KW-1185">Reference proteome</keyword>
<keyword id="KW-0732">Signal</keyword>
<keyword id="KW-0879">Wnt signaling pathway</keyword>
<dbReference type="EMBL" id="BC085892">
    <property type="protein sequence ID" value="AAH85892.1"/>
    <property type="molecule type" value="mRNA"/>
</dbReference>
<dbReference type="RefSeq" id="NP_001008346.1">
    <property type="nucleotide sequence ID" value="NM_001008345.1"/>
</dbReference>
<dbReference type="BMRB" id="Q5U2R7"/>
<dbReference type="SMR" id="Q5U2R7"/>
<dbReference type="FunCoup" id="Q5U2R7">
    <property type="interactions" value="3124"/>
</dbReference>
<dbReference type="STRING" id="10116.ENSRNOP00000052447"/>
<dbReference type="GlyCosmos" id="Q5U2R7">
    <property type="glycosylation" value="1 site, No reported glycans"/>
</dbReference>
<dbReference type="GlyGen" id="Q5U2R7">
    <property type="glycosylation" value="1 site"/>
</dbReference>
<dbReference type="PhosphoSitePlus" id="Q5U2R7"/>
<dbReference type="jPOST" id="Q5U2R7"/>
<dbReference type="PaxDb" id="10116-ENSRNOP00000052447"/>
<dbReference type="ABCD" id="Q5U2R7">
    <property type="antibodies" value="1 sequenced antibody"/>
</dbReference>
<dbReference type="Ensembl" id="ENSRNOT00000105170.1">
    <property type="protein sequence ID" value="ENSRNOP00000092593.1"/>
    <property type="gene ID" value="ENSRNOG00000012366.7"/>
</dbReference>
<dbReference type="GeneID" id="308796"/>
<dbReference type="KEGG" id="rno:308796"/>
<dbReference type="AGR" id="RGD:1310344"/>
<dbReference type="CTD" id="23184"/>
<dbReference type="RGD" id="1310344">
    <property type="gene designation" value="Mesd"/>
</dbReference>
<dbReference type="eggNOG" id="KOG4357">
    <property type="taxonomic scope" value="Eukaryota"/>
</dbReference>
<dbReference type="GeneTree" id="ENSGT00390000000993"/>
<dbReference type="HOGENOM" id="CLU_111621_0_0_1"/>
<dbReference type="InParanoid" id="Q5U2R7"/>
<dbReference type="OMA" id="QQRCADV"/>
<dbReference type="OrthoDB" id="78410at9989"/>
<dbReference type="PhylomeDB" id="Q5U2R7"/>
<dbReference type="TreeFam" id="TF315614"/>
<dbReference type="PRO" id="PR:Q5U2R7"/>
<dbReference type="Proteomes" id="UP000002494">
    <property type="component" value="Chromosome 1"/>
</dbReference>
<dbReference type="Bgee" id="ENSRNOG00000012366">
    <property type="expression patterns" value="Expressed in ovary and 20 other cell types or tissues"/>
</dbReference>
<dbReference type="GO" id="GO:0005783">
    <property type="term" value="C:endoplasmic reticulum"/>
    <property type="evidence" value="ECO:0000266"/>
    <property type="project" value="RGD"/>
</dbReference>
<dbReference type="GO" id="GO:0005886">
    <property type="term" value="C:plasma membrane"/>
    <property type="evidence" value="ECO:0000266"/>
    <property type="project" value="RGD"/>
</dbReference>
<dbReference type="GO" id="GO:0042802">
    <property type="term" value="F:identical protein binding"/>
    <property type="evidence" value="ECO:0000266"/>
    <property type="project" value="RGD"/>
</dbReference>
<dbReference type="GO" id="GO:0050750">
    <property type="term" value="F:low-density lipoprotein particle receptor binding"/>
    <property type="evidence" value="ECO:0000266"/>
    <property type="project" value="RGD"/>
</dbReference>
<dbReference type="GO" id="GO:0001503">
    <property type="term" value="P:ossification"/>
    <property type="evidence" value="ECO:0000266"/>
    <property type="project" value="RGD"/>
</dbReference>
<dbReference type="GO" id="GO:0006909">
    <property type="term" value="P:phagocytosis"/>
    <property type="evidence" value="ECO:0000250"/>
    <property type="project" value="UniProtKB"/>
</dbReference>
<dbReference type="GO" id="GO:1904395">
    <property type="term" value="P:positive regulation of skeletal muscle acetylcholine-gated channel clustering"/>
    <property type="evidence" value="ECO:0000250"/>
    <property type="project" value="UniProtKB"/>
</dbReference>
<dbReference type="GO" id="GO:0006457">
    <property type="term" value="P:protein folding"/>
    <property type="evidence" value="ECO:0000250"/>
    <property type="project" value="UniProtKB"/>
</dbReference>
<dbReference type="GO" id="GO:0034394">
    <property type="term" value="P:protein localization to cell surface"/>
    <property type="evidence" value="ECO:0000250"/>
    <property type="project" value="UniProtKB"/>
</dbReference>
<dbReference type="GO" id="GO:0016055">
    <property type="term" value="P:Wnt signaling pathway"/>
    <property type="evidence" value="ECO:0007669"/>
    <property type="project" value="UniProtKB-KW"/>
</dbReference>
<dbReference type="FunFam" id="3.30.70.260:FF:000031">
    <property type="entry name" value="LDLR chaperone MESD"/>
    <property type="match status" value="1"/>
</dbReference>
<dbReference type="Gene3D" id="3.30.70.260">
    <property type="match status" value="1"/>
</dbReference>
<dbReference type="Gene3D" id="6.10.250.640">
    <property type="match status" value="1"/>
</dbReference>
<dbReference type="InterPro" id="IPR019330">
    <property type="entry name" value="MESD"/>
</dbReference>
<dbReference type="PANTHER" id="PTHR17600:SF2">
    <property type="entry name" value="LRP CHAPERONE MESD"/>
    <property type="match status" value="1"/>
</dbReference>
<dbReference type="PANTHER" id="PTHR17600">
    <property type="entry name" value="MESODERM DEVELOPMENT CANDIDATE 2"/>
    <property type="match status" value="1"/>
</dbReference>
<dbReference type="Pfam" id="PF10185">
    <property type="entry name" value="Mesd"/>
    <property type="match status" value="1"/>
</dbReference>
<feature type="signal peptide" evidence="2">
    <location>
        <begin position="1"/>
        <end position="29"/>
    </location>
</feature>
<feature type="chain" id="PRO_0000240320" description="LRP chaperone MESD">
    <location>
        <begin position="30"/>
        <end position="224"/>
    </location>
</feature>
<feature type="region of interest" description="Chaperone domain" evidence="1">
    <location>
        <begin position="1"/>
        <end position="155"/>
    </location>
</feature>
<feature type="region of interest" description="Escort domain" evidence="1">
    <location>
        <begin position="156"/>
        <end position="195"/>
    </location>
</feature>
<feature type="region of interest" description="Disordered" evidence="3">
    <location>
        <begin position="178"/>
        <end position="224"/>
    </location>
</feature>
<feature type="short sequence motif" description="Prevents secretion from ER">
    <location>
        <begin position="221"/>
        <end position="224"/>
    </location>
</feature>
<feature type="compositionally biased region" description="Basic and acidic residues" evidence="3">
    <location>
        <begin position="187"/>
        <end position="224"/>
    </location>
</feature>
<feature type="glycosylation site" description="N-linked (GlcNAc...) asparagine" evidence="2">
    <location>
        <position position="192"/>
    </location>
</feature>
<accession>Q5U2R7</accession>
<gene>
    <name type="primary">Mesd</name>
    <name type="synonym">Mesdc2</name>
</gene>
<proteinExistence type="evidence at transcript level"/>
<reference key="1">
    <citation type="journal article" date="2004" name="Genome Res.">
        <title>The status, quality, and expansion of the NIH full-length cDNA project: the Mammalian Gene Collection (MGC).</title>
        <authorList>
            <consortium name="The MGC Project Team"/>
        </authorList>
    </citation>
    <scope>NUCLEOTIDE SEQUENCE [LARGE SCALE MRNA]</scope>
    <source>
        <tissue>Heart</tissue>
    </source>
</reference>
<name>MESD_RAT</name>
<sequence length="224" mass="25216">MAASSWLRAVLLFLCASDLLLLSPPEAYATDTPGEAITPPRKKKDIRDYNDADMARLLEQWEKDDDIEEGDLPEHKRPSAPIDFSKLDPGKPESILKMTKKGKTLMMFVTISGNPTEKETEEITSLWQGSLFNANYDVQRFIVGSDRAIFMLRDGSYAWEIKDFLVNQDRCAEVTLEGQMYPGKGGGSKEKNKTKPEKGKKKEGDPKPRASKEDNRAGSRREDL</sequence>
<protein>
    <recommendedName>
        <fullName evidence="4">LRP chaperone MESD</fullName>
    </recommendedName>
    <alternativeName>
        <fullName>LDLR chaperone MESD</fullName>
    </alternativeName>
    <alternativeName>
        <fullName>Mesoderm development candidate 2</fullName>
    </alternativeName>
    <alternativeName>
        <fullName>Mesoderm development protein</fullName>
    </alternativeName>
</protein>
<evidence type="ECO:0000250" key="1">
    <source>
        <dbReference type="UniProtKB" id="Q9ERE7"/>
    </source>
</evidence>
<evidence type="ECO:0000255" key="2"/>
<evidence type="ECO:0000256" key="3">
    <source>
        <dbReference type="SAM" id="MobiDB-lite"/>
    </source>
</evidence>
<evidence type="ECO:0000305" key="4"/>